<feature type="chain" id="PRO_0000339342" description="Histidine protein methyltransferase 1">
    <location>
        <begin position="1"/>
        <end position="339"/>
    </location>
</feature>
<feature type="modified residue" description="Phosphoserine" evidence="3">
    <location>
        <position position="333"/>
    </location>
</feature>
<feature type="modified residue" description="Phosphoserine" evidence="3">
    <location>
        <position position="338"/>
    </location>
</feature>
<evidence type="ECO:0000250" key="1">
    <source>
        <dbReference type="UniProtKB" id="P40481"/>
    </source>
</evidence>
<evidence type="ECO:0000269" key="2">
    <source>
    </source>
</evidence>
<evidence type="ECO:0000269" key="3">
    <source>
    </source>
</evidence>
<evidence type="ECO:0000305" key="4"/>
<reference key="1">
    <citation type="journal article" date="2002" name="Nature">
        <title>The genome sequence of Schizosaccharomyces pombe.</title>
        <authorList>
            <person name="Wood V."/>
            <person name="Gwilliam R."/>
            <person name="Rajandream M.A."/>
            <person name="Lyne M.H."/>
            <person name="Lyne R."/>
            <person name="Stewart A."/>
            <person name="Sgouros J.G."/>
            <person name="Peat N."/>
            <person name="Hayles J."/>
            <person name="Baker S.G."/>
            <person name="Basham D."/>
            <person name="Bowman S."/>
            <person name="Brooks K."/>
            <person name="Brown D."/>
            <person name="Brown S."/>
            <person name="Chillingworth T."/>
            <person name="Churcher C.M."/>
            <person name="Collins M."/>
            <person name="Connor R."/>
            <person name="Cronin A."/>
            <person name="Davis P."/>
            <person name="Feltwell T."/>
            <person name="Fraser A."/>
            <person name="Gentles S."/>
            <person name="Goble A."/>
            <person name="Hamlin N."/>
            <person name="Harris D.E."/>
            <person name="Hidalgo J."/>
            <person name="Hodgson G."/>
            <person name="Holroyd S."/>
            <person name="Hornsby T."/>
            <person name="Howarth S."/>
            <person name="Huckle E.J."/>
            <person name="Hunt S."/>
            <person name="Jagels K."/>
            <person name="James K.D."/>
            <person name="Jones L."/>
            <person name="Jones M."/>
            <person name="Leather S."/>
            <person name="McDonald S."/>
            <person name="McLean J."/>
            <person name="Mooney P."/>
            <person name="Moule S."/>
            <person name="Mungall K.L."/>
            <person name="Murphy L.D."/>
            <person name="Niblett D."/>
            <person name="Odell C."/>
            <person name="Oliver K."/>
            <person name="O'Neil S."/>
            <person name="Pearson D."/>
            <person name="Quail M.A."/>
            <person name="Rabbinowitsch E."/>
            <person name="Rutherford K.M."/>
            <person name="Rutter S."/>
            <person name="Saunders D."/>
            <person name="Seeger K."/>
            <person name="Sharp S."/>
            <person name="Skelton J."/>
            <person name="Simmonds M.N."/>
            <person name="Squares R."/>
            <person name="Squares S."/>
            <person name="Stevens K."/>
            <person name="Taylor K."/>
            <person name="Taylor R.G."/>
            <person name="Tivey A."/>
            <person name="Walsh S.V."/>
            <person name="Warren T."/>
            <person name="Whitehead S."/>
            <person name="Woodward J.R."/>
            <person name="Volckaert G."/>
            <person name="Aert R."/>
            <person name="Robben J."/>
            <person name="Grymonprez B."/>
            <person name="Weltjens I."/>
            <person name="Vanstreels E."/>
            <person name="Rieger M."/>
            <person name="Schaefer M."/>
            <person name="Mueller-Auer S."/>
            <person name="Gabel C."/>
            <person name="Fuchs M."/>
            <person name="Duesterhoeft A."/>
            <person name="Fritzc C."/>
            <person name="Holzer E."/>
            <person name="Moestl D."/>
            <person name="Hilbert H."/>
            <person name="Borzym K."/>
            <person name="Langer I."/>
            <person name="Beck A."/>
            <person name="Lehrach H."/>
            <person name="Reinhardt R."/>
            <person name="Pohl T.M."/>
            <person name="Eger P."/>
            <person name="Zimmermann W."/>
            <person name="Wedler H."/>
            <person name="Wambutt R."/>
            <person name="Purnelle B."/>
            <person name="Goffeau A."/>
            <person name="Cadieu E."/>
            <person name="Dreano S."/>
            <person name="Gloux S."/>
            <person name="Lelaure V."/>
            <person name="Mottier S."/>
            <person name="Galibert F."/>
            <person name="Aves S.J."/>
            <person name="Xiang Z."/>
            <person name="Hunt C."/>
            <person name="Moore K."/>
            <person name="Hurst S.M."/>
            <person name="Lucas M."/>
            <person name="Rochet M."/>
            <person name="Gaillardin C."/>
            <person name="Tallada V.A."/>
            <person name="Garzon A."/>
            <person name="Thode G."/>
            <person name="Daga R.R."/>
            <person name="Cruzado L."/>
            <person name="Jimenez J."/>
            <person name="Sanchez M."/>
            <person name="del Rey F."/>
            <person name="Benito J."/>
            <person name="Dominguez A."/>
            <person name="Revuelta J.L."/>
            <person name="Moreno S."/>
            <person name="Armstrong J."/>
            <person name="Forsburg S.L."/>
            <person name="Cerutti L."/>
            <person name="Lowe T."/>
            <person name="McCombie W.R."/>
            <person name="Paulsen I."/>
            <person name="Potashkin J."/>
            <person name="Shpakovski G.V."/>
            <person name="Ussery D."/>
            <person name="Barrell B.G."/>
            <person name="Nurse P."/>
        </authorList>
    </citation>
    <scope>NUCLEOTIDE SEQUENCE [LARGE SCALE GENOMIC DNA]</scope>
    <source>
        <strain>972 / ATCC 24843</strain>
    </source>
</reference>
<reference key="2">
    <citation type="journal article" date="2006" name="Nat. Biotechnol.">
        <title>ORFeome cloning and global analysis of protein localization in the fission yeast Schizosaccharomyces pombe.</title>
        <authorList>
            <person name="Matsuyama A."/>
            <person name="Arai R."/>
            <person name="Yashiroda Y."/>
            <person name="Shirai A."/>
            <person name="Kamata A."/>
            <person name="Sekido S."/>
            <person name="Kobayashi Y."/>
            <person name="Hashimoto A."/>
            <person name="Hamamoto M."/>
            <person name="Hiraoka Y."/>
            <person name="Horinouchi S."/>
            <person name="Yoshida M."/>
        </authorList>
    </citation>
    <scope>SUBCELLULAR LOCATION [LARGE SCALE ANALYSIS]</scope>
</reference>
<reference key="3">
    <citation type="journal article" date="2008" name="J. Proteome Res.">
        <title>Phosphoproteome analysis of fission yeast.</title>
        <authorList>
            <person name="Wilson-Grady J.T."/>
            <person name="Villen J."/>
            <person name="Gygi S.P."/>
        </authorList>
    </citation>
    <scope>PHOSPHORYLATION [LARGE SCALE ANALYSIS] AT SER-333 AND SER-338</scope>
    <scope>IDENTIFICATION BY MASS SPECTROMETRY</scope>
</reference>
<organism>
    <name type="scientific">Schizosaccharomyces pombe (strain 972 / ATCC 24843)</name>
    <name type="common">Fission yeast</name>
    <dbReference type="NCBI Taxonomy" id="284812"/>
    <lineage>
        <taxon>Eukaryota</taxon>
        <taxon>Fungi</taxon>
        <taxon>Dikarya</taxon>
        <taxon>Ascomycota</taxon>
        <taxon>Taphrinomycotina</taxon>
        <taxon>Schizosaccharomycetes</taxon>
        <taxon>Schizosaccharomycetales</taxon>
        <taxon>Schizosaccharomycetaceae</taxon>
        <taxon>Schizosaccharomyces</taxon>
    </lineage>
</organism>
<protein>
    <recommendedName>
        <fullName>Histidine protein methyltransferase 1</fullName>
        <ecNumber evidence="1">2.1.1.85</ecNumber>
    </recommendedName>
    <alternativeName>
        <fullName>Methyltransferase-like protein 18 homolog C1071.05</fullName>
    </alternativeName>
</protein>
<name>HPM1_SCHPO</name>
<proteinExistence type="evidence at protein level"/>
<sequence>MQANGFSFGFYDEPNNLNGQDVGADSLPSVAIESDSLGHMLKYIPEKLSYARVSGLGHTFVQRELWDVKMQLMEQDDSIESDDKLKVLDGCNDLVPNVYEGGYKTWECSLDLANEIKKIDVVKNNLTTVLELGCGSAIPILSCFQEFYKHRIPCTLVFQDFNVDVLRYVTLPNLLLNWYFCTQEHDSSEKHGTIDVSPSLLQEFSDDLARTNIYCEFLCGCWSEEMQLLIQRTYGDHYFSLVLASETIYSLPSLENFLYMLLKNTKNLALVAGKDLYFGVGGSILEFNSRLQKLVDDPNSLKAIKTSTQNVGRSIVYWEKEFPPSNIDSSPQSPLPGSL</sequence>
<comment type="function">
    <text evidence="1">Protein-histidine N-methyltransferase that mediates methylation of target protein on His residues.</text>
</comment>
<comment type="catalytic activity">
    <reaction evidence="1">
        <text>L-histidyl-[protein] + S-adenosyl-L-methionine = N(tele)-methyl-L-histidyl-[protein] + S-adenosyl-L-homocysteine + H(+)</text>
        <dbReference type="Rhea" id="RHEA:19369"/>
        <dbReference type="Rhea" id="RHEA-COMP:9745"/>
        <dbReference type="Rhea" id="RHEA-COMP:11600"/>
        <dbReference type="ChEBI" id="CHEBI:15378"/>
        <dbReference type="ChEBI" id="CHEBI:16367"/>
        <dbReference type="ChEBI" id="CHEBI:29979"/>
        <dbReference type="ChEBI" id="CHEBI:57856"/>
        <dbReference type="ChEBI" id="CHEBI:59789"/>
        <dbReference type="EC" id="2.1.1.85"/>
    </reaction>
</comment>
<comment type="subcellular location">
    <subcellularLocation>
        <location evidence="2">Cytoplasm</location>
    </subcellularLocation>
    <subcellularLocation>
        <location evidence="2">Nucleus</location>
    </subcellularLocation>
</comment>
<comment type="similarity">
    <text evidence="4">Belongs to the methyltransferase superfamily. METTL18 family.</text>
</comment>
<dbReference type="EC" id="2.1.1.85" evidence="1"/>
<dbReference type="EMBL" id="CU329670">
    <property type="protein sequence ID" value="CAB59881.1"/>
    <property type="molecule type" value="Genomic_DNA"/>
</dbReference>
<dbReference type="PIR" id="T37487">
    <property type="entry name" value="T37487"/>
</dbReference>
<dbReference type="SMR" id="Q9UTQ8"/>
<dbReference type="BioGRID" id="279391">
    <property type="interactions" value="8"/>
</dbReference>
<dbReference type="FunCoup" id="Q9UTQ8">
    <property type="interactions" value="369"/>
</dbReference>
<dbReference type="STRING" id="284812.Q9UTQ8"/>
<dbReference type="iPTMnet" id="Q9UTQ8"/>
<dbReference type="PaxDb" id="4896-SPAC1071.05.1"/>
<dbReference type="EnsemblFungi" id="SPAC1071.05.1">
    <property type="protein sequence ID" value="SPAC1071.05.1:pep"/>
    <property type="gene ID" value="SPAC1071.05"/>
</dbReference>
<dbReference type="KEGG" id="spo:2542951"/>
<dbReference type="PomBase" id="SPAC1071.05"/>
<dbReference type="VEuPathDB" id="FungiDB:SPAC1071.05"/>
<dbReference type="eggNOG" id="KOG2920">
    <property type="taxonomic scope" value="Eukaryota"/>
</dbReference>
<dbReference type="HOGENOM" id="CLU_038704_1_1_1"/>
<dbReference type="InParanoid" id="Q9UTQ8"/>
<dbReference type="OMA" id="NLLLTWH"/>
<dbReference type="PhylomeDB" id="Q9UTQ8"/>
<dbReference type="PRO" id="PR:Q9UTQ8"/>
<dbReference type="Proteomes" id="UP000002485">
    <property type="component" value="Chromosome I"/>
</dbReference>
<dbReference type="GO" id="GO:0005829">
    <property type="term" value="C:cytosol"/>
    <property type="evidence" value="ECO:0007005"/>
    <property type="project" value="PomBase"/>
</dbReference>
<dbReference type="GO" id="GO:0005634">
    <property type="term" value="C:nucleus"/>
    <property type="evidence" value="ECO:0007005"/>
    <property type="project" value="PomBase"/>
</dbReference>
<dbReference type="GO" id="GO:0018064">
    <property type="term" value="F:protein-L-histidine N-tele-methyltransferase activity"/>
    <property type="evidence" value="ECO:0000318"/>
    <property type="project" value="GO_Central"/>
</dbReference>
<dbReference type="GO" id="GO:0180023">
    <property type="term" value="P:cytosolic large ribosomal subunit assembly"/>
    <property type="evidence" value="ECO:0000266"/>
    <property type="project" value="PomBase"/>
</dbReference>
<dbReference type="GO" id="GO:0032259">
    <property type="term" value="P:methylation"/>
    <property type="evidence" value="ECO:0007669"/>
    <property type="project" value="UniProtKB-KW"/>
</dbReference>
<dbReference type="GO" id="GO:0006417">
    <property type="term" value="P:regulation of translation"/>
    <property type="evidence" value="ECO:0000318"/>
    <property type="project" value="GO_Central"/>
</dbReference>
<dbReference type="Gene3D" id="3.40.50.150">
    <property type="entry name" value="Vaccinia Virus protein VP39"/>
    <property type="match status" value="1"/>
</dbReference>
<dbReference type="InterPro" id="IPR019410">
    <property type="entry name" value="Methyltransf_16"/>
</dbReference>
<dbReference type="InterPro" id="IPR029063">
    <property type="entry name" value="SAM-dependent_MTases_sf"/>
</dbReference>
<dbReference type="PANTHER" id="PTHR14614">
    <property type="entry name" value="HEPATOCELLULAR CARCINOMA-ASSOCIATED ANTIGEN"/>
    <property type="match status" value="1"/>
</dbReference>
<dbReference type="PANTHER" id="PTHR14614:SF39">
    <property type="entry name" value="HISTIDINE PROTEIN METHYLTRANSFERASE 1 HOMOLOG"/>
    <property type="match status" value="1"/>
</dbReference>
<dbReference type="SUPFAM" id="SSF53335">
    <property type="entry name" value="S-adenosyl-L-methionine-dependent methyltransferases"/>
    <property type="match status" value="1"/>
</dbReference>
<accession>Q9UTQ8</accession>
<gene>
    <name type="ORF">SPAC1071.05</name>
</gene>
<keyword id="KW-0963">Cytoplasm</keyword>
<keyword id="KW-0489">Methyltransferase</keyword>
<keyword id="KW-0539">Nucleus</keyword>
<keyword id="KW-0597">Phosphoprotein</keyword>
<keyword id="KW-1185">Reference proteome</keyword>
<keyword id="KW-0949">S-adenosyl-L-methionine</keyword>
<keyword id="KW-0808">Transferase</keyword>